<feature type="chain" id="PRO_0000432974" description="Peptidoglycan hydrolase gp36">
    <location>
        <begin position="1"/>
        <end position="978"/>
    </location>
</feature>
<feature type="region of interest" description="Disordered" evidence="1">
    <location>
        <begin position="9"/>
        <end position="29"/>
    </location>
</feature>
<feature type="compositionally biased region" description="Polar residues" evidence="1">
    <location>
        <begin position="14"/>
        <end position="29"/>
    </location>
</feature>
<gene>
    <name evidence="4" type="primary">36</name>
</gene>
<sequence length="978" mass="107532">MAIERQAVQGLRRVQSTGGPSAASFATRQVGVQETSASGSRFLEDLVNAAGSLATVTTSILNQRVEDDKVRQYNRALTGLMPTEDATVGGARAHMLVSLQNDIIAQTMQLSDDAQRFDGDDSQWEDHVINARMAVQDRLWDTYPELRGDKESMRVVTNAFMEQQPKIFAARETAKLKQEAEARIKSMESRILLATRDVPGEAMGDALNQLQKEAMAMQITKQEFDALVSQLAANRAAIGDDSMIQGTKSLKDENGVSLYDRVGQLQTGEIQANRTWAAQNQVALFEKKDAAIKAFEAGQLNREQLLQVMQNHNEISGGTAWSDSEIKSLFDRQAKARATSAKLEDLVARGEHGSPLGLQDISKEDRKAYAGALVDAYTKLANDEITRTGATGEEAEAIRGRYEQMRYAKLGQQLIEDPIIKERYGSLMQLSSANLKDMKIEPEALQTIMRARDSIPEDARRAVMGDKEYAFAENYDLATRMGYTPGQAIEFAQNASRGDKLPGSVMKELNDEVDGVVSDVASGSWLTRGDNMSDMGRDLMLEEANQIARSMKVAGHNNDTIKRHLKSFLQNQYTQLSEGFFTQGVLVKGDVRTLGDTIGANQKDVPTVLRQYLDNHKQALLDASGGMEEGDLYFDVDSKRGMFTIRAGSGRVPVTPAMPLSEIKGQDLLKEHYEKAVKERDEAKKNFEANQMRMWGAGGYQSPAPEKTTAKTVGSRGIADFLMSPAFASGENLPSNFEFNYKRNNMDFYNYVAKTENGANVGFDRVAGVYTPYKDAHGQSVGYGHFLTEEEKKNGYITIGEDKVPFAPGQSQLTPERAMRLLEQDMKSHVPSTKDWAVPFDAMHPGVQRGLMDLSYNLGKDGIKNAPKAYAAFKAGKFTDGFIEMLSTASTEGKRSSGLLVRRAEAYNLAQSGGSVPKISEVETREDGSMYVKFSGSMSEAFVSKSILGKIGKDGWMEVYPPKAGALASGTKVGRIKL</sequence>
<accession>Q7Y5N4</accession>
<keyword id="KW-0929">Antimicrobial</keyword>
<keyword id="KW-0081">Bacteriolytic enzyme</keyword>
<keyword id="KW-1235">Degradation of host cell envelope components during virus entry</keyword>
<keyword id="KW-1236">Degradation of host peptidoglycans during virus entry</keyword>
<keyword id="KW-1185">Reference proteome</keyword>
<keyword id="KW-1171">Viral genome ejection through host cell envelope</keyword>
<keyword id="KW-1162">Viral penetration into host cytoplasm</keyword>
<keyword id="KW-1244">Viral short tail ejection system</keyword>
<keyword id="KW-0946">Virion</keyword>
<keyword id="KW-1160">Virus entry into host cell</keyword>
<proteinExistence type="predicted"/>
<organismHost>
    <name type="scientific">Salmonella typhimurium</name>
    <dbReference type="NCBI Taxonomy" id="90371"/>
</organismHost>
<evidence type="ECO:0000256" key="1">
    <source>
        <dbReference type="SAM" id="MobiDB-lite"/>
    </source>
</evidence>
<evidence type="ECO:0000269" key="2">
    <source>
    </source>
</evidence>
<evidence type="ECO:0000305" key="3"/>
<evidence type="ECO:0000312" key="4">
    <source>
        <dbReference type="EMBL" id="AAP48775.1"/>
    </source>
</evidence>
<evidence type="ECO:0000312" key="5">
    <source>
        <dbReference type="Proteomes" id="UP000000843"/>
    </source>
</evidence>
<name>EXLYS_BPSP6</name>
<comment type="function">
    <text evidence="2">Exolysin that catalyzes the cleavage of the host peptidoglycans during virus entry.</text>
</comment>
<comment type="subcellular location">
    <subcellularLocation>
        <location evidence="3">Virion</location>
    </subcellularLocation>
</comment>
<organism evidence="5">
    <name type="scientific">Enterobacteria phage SP6</name>
    <name type="common">Bacteriophage SP6</name>
    <dbReference type="NCBI Taxonomy" id="2907955"/>
    <lineage>
        <taxon>Viruses</taxon>
        <taxon>Duplodnaviria</taxon>
        <taxon>Heunggongvirae</taxon>
        <taxon>Uroviricota</taxon>
        <taxon>Caudoviricetes</taxon>
        <taxon>Autographiviridae</taxon>
        <taxon>Molineuxvirinae</taxon>
        <taxon>Zindervirus</taxon>
        <taxon>Zindervirus SP6</taxon>
    </lineage>
</organism>
<dbReference type="EMBL" id="AY288927">
    <property type="protein sequence ID" value="AAP48775.1"/>
    <property type="molecule type" value="Genomic_DNA"/>
</dbReference>
<dbReference type="EMBL" id="AY370673">
    <property type="protein sequence ID" value="AAR90027.1"/>
    <property type="molecule type" value="Genomic_DNA"/>
</dbReference>
<dbReference type="RefSeq" id="NP_853596.1">
    <property type="nucleotide sequence ID" value="NC_004831.2"/>
</dbReference>
<dbReference type="KEGG" id="vg:1481804"/>
<dbReference type="Proteomes" id="UP000000843">
    <property type="component" value="Genome"/>
</dbReference>
<dbReference type="Proteomes" id="UP000001721">
    <property type="component" value="Genome"/>
</dbReference>
<dbReference type="GO" id="GO:0044423">
    <property type="term" value="C:virion component"/>
    <property type="evidence" value="ECO:0007669"/>
    <property type="project" value="UniProtKB-KW"/>
</dbReference>
<dbReference type="GO" id="GO:0003796">
    <property type="term" value="F:lysozyme activity"/>
    <property type="evidence" value="ECO:0007669"/>
    <property type="project" value="InterPro"/>
</dbReference>
<dbReference type="GO" id="GO:0016998">
    <property type="term" value="P:cell wall macromolecule catabolic process"/>
    <property type="evidence" value="ECO:0007669"/>
    <property type="project" value="InterPro"/>
</dbReference>
<dbReference type="GO" id="GO:0042742">
    <property type="term" value="P:defense response to bacterium"/>
    <property type="evidence" value="ECO:0007669"/>
    <property type="project" value="UniProtKB-KW"/>
</dbReference>
<dbReference type="GO" id="GO:0031640">
    <property type="term" value="P:killing of cells of another organism"/>
    <property type="evidence" value="ECO:0007669"/>
    <property type="project" value="UniProtKB-KW"/>
</dbReference>
<dbReference type="GO" id="GO:0009253">
    <property type="term" value="P:peptidoglycan catabolic process"/>
    <property type="evidence" value="ECO:0007669"/>
    <property type="project" value="InterPro"/>
</dbReference>
<dbReference type="GO" id="GO:0044409">
    <property type="term" value="P:symbiont entry into host"/>
    <property type="evidence" value="ECO:0000314"/>
    <property type="project" value="UniProtKB"/>
</dbReference>
<dbReference type="GO" id="GO:0098994">
    <property type="term" value="P:symbiont entry into host cell via disruption of host cell envelope"/>
    <property type="evidence" value="ECO:0007669"/>
    <property type="project" value="UniProtKB-KW"/>
</dbReference>
<dbReference type="GO" id="GO:0098932">
    <property type="term" value="P:symbiont entry into host cell via disruption of host cell wall peptidoglycan"/>
    <property type="evidence" value="ECO:0007669"/>
    <property type="project" value="UniProtKB-KW"/>
</dbReference>
<dbReference type="GO" id="GO:0099002">
    <property type="term" value="P:symbiont genome ejection through host cell envelope, short tail mechanism"/>
    <property type="evidence" value="ECO:0007669"/>
    <property type="project" value="UniProtKB-KW"/>
</dbReference>
<dbReference type="FunFam" id="1.10.530.40:FF:000007">
    <property type="entry name" value="Peptidoglycan hydrolase gp36"/>
    <property type="match status" value="1"/>
</dbReference>
<dbReference type="Gene3D" id="1.10.530.40">
    <property type="match status" value="1"/>
</dbReference>
<dbReference type="InterPro" id="IPR002196">
    <property type="entry name" value="Glyco_hydro_24"/>
</dbReference>
<dbReference type="InterPro" id="IPR023346">
    <property type="entry name" value="Lysozyme-like_dom_sf"/>
</dbReference>
<dbReference type="InterPro" id="IPR023347">
    <property type="entry name" value="Lysozyme_dom_sf"/>
</dbReference>
<dbReference type="Pfam" id="PF00959">
    <property type="entry name" value="Phage_lysozyme"/>
    <property type="match status" value="1"/>
</dbReference>
<dbReference type="SUPFAM" id="SSF53955">
    <property type="entry name" value="Lysozyme-like"/>
    <property type="match status" value="1"/>
</dbReference>
<reference key="1">
    <citation type="journal article" date="2004" name="J. Bacteriol.">
        <title>Complete genomic sequence of the virulent Salmonella bacteriophage SP6.</title>
        <authorList>
            <person name="Dobbins A.T."/>
            <person name="George M. Jr."/>
            <person name="Basham D.A."/>
            <person name="Ford M.E."/>
            <person name="Houtz J.M."/>
            <person name="Pedulla M.L."/>
            <person name="Lawrence J.G."/>
            <person name="Hatfull G.F."/>
            <person name="Hendrix R.W."/>
        </authorList>
    </citation>
    <scope>NUCLEOTIDE SEQUENCE [GENOMIC DNA]</scope>
</reference>
<reference key="2">
    <citation type="journal article" date="2004" name="J. Mol. Biol.">
        <title>Genomic analysis of bacteriophages SP6 and K1-5, an estranged subgroup of the T7 supergroup.</title>
        <authorList>
            <person name="Scholl D."/>
            <person name="Kieleczawa J."/>
            <person name="Kemp P."/>
            <person name="Rush J."/>
            <person name="Richardson C.C."/>
            <person name="Merril C."/>
            <person name="Adhya S."/>
            <person name="Molineux I.J."/>
        </authorList>
    </citation>
    <scope>NUCLEOTIDE SEQUENCE [GENOMIC DNA]</scope>
</reference>
<reference key="3">
    <citation type="submission" date="1999-06" db="EMBL/GenBank/DDBJ databases">
        <authorList>
            <person name="Tseng T.Y."/>
            <person name="Frick D.N."/>
            <person name="Richardson C.C."/>
        </authorList>
    </citation>
    <scope>NUCLEOTIDE SEQUENCE [GENOMIC DNA]</scope>
</reference>
<reference key="4">
    <citation type="journal article" date="2004" name="Mol. Microbiol.">
        <title>Peptidoglycan hydrolytic activities associated with bacteriophage virions.</title>
        <authorList>
            <person name="Moak M."/>
            <person name="Molineux I.J."/>
        </authorList>
    </citation>
    <scope>FUNCTION</scope>
</reference>
<protein>
    <recommendedName>
        <fullName evidence="3">Peptidoglycan hydrolase gp36</fullName>
    </recommendedName>
    <alternativeName>
        <fullName evidence="3">Gene product 36</fullName>
        <shortName>Gp36</shortName>
    </alternativeName>
</protein>